<proteinExistence type="inferred from homology"/>
<protein>
    <recommendedName>
        <fullName evidence="1">UDP-N-acetylmuramoylalanine--D-glutamate ligase</fullName>
        <ecNumber evidence="1">6.3.2.9</ecNumber>
    </recommendedName>
    <alternativeName>
        <fullName evidence="1">D-glutamic acid-adding enzyme</fullName>
    </alternativeName>
    <alternativeName>
        <fullName evidence="1">UDP-N-acetylmuramoyl-L-alanyl-D-glutamate synthetase</fullName>
    </alternativeName>
</protein>
<dbReference type="EC" id="6.3.2.9" evidence="1"/>
<dbReference type="EMBL" id="CP001129">
    <property type="protein sequence ID" value="ACG61960.1"/>
    <property type="molecule type" value="Genomic_DNA"/>
</dbReference>
<dbReference type="RefSeq" id="WP_012515236.1">
    <property type="nucleotide sequence ID" value="NC_011134.1"/>
</dbReference>
<dbReference type="SMR" id="B4U1U3"/>
<dbReference type="KEGG" id="sez:Sez_0591"/>
<dbReference type="HOGENOM" id="CLU_032540_0_1_9"/>
<dbReference type="UniPathway" id="UPA00219"/>
<dbReference type="Proteomes" id="UP000001873">
    <property type="component" value="Chromosome"/>
</dbReference>
<dbReference type="GO" id="GO:0005737">
    <property type="term" value="C:cytoplasm"/>
    <property type="evidence" value="ECO:0007669"/>
    <property type="project" value="UniProtKB-SubCell"/>
</dbReference>
<dbReference type="GO" id="GO:0005524">
    <property type="term" value="F:ATP binding"/>
    <property type="evidence" value="ECO:0007669"/>
    <property type="project" value="UniProtKB-UniRule"/>
</dbReference>
<dbReference type="GO" id="GO:0008764">
    <property type="term" value="F:UDP-N-acetylmuramoylalanine-D-glutamate ligase activity"/>
    <property type="evidence" value="ECO:0007669"/>
    <property type="project" value="UniProtKB-UniRule"/>
</dbReference>
<dbReference type="GO" id="GO:0051301">
    <property type="term" value="P:cell division"/>
    <property type="evidence" value="ECO:0007669"/>
    <property type="project" value="UniProtKB-KW"/>
</dbReference>
<dbReference type="GO" id="GO:0071555">
    <property type="term" value="P:cell wall organization"/>
    <property type="evidence" value="ECO:0007669"/>
    <property type="project" value="UniProtKB-KW"/>
</dbReference>
<dbReference type="GO" id="GO:0009252">
    <property type="term" value="P:peptidoglycan biosynthetic process"/>
    <property type="evidence" value="ECO:0007669"/>
    <property type="project" value="UniProtKB-UniRule"/>
</dbReference>
<dbReference type="GO" id="GO:0008360">
    <property type="term" value="P:regulation of cell shape"/>
    <property type="evidence" value="ECO:0007669"/>
    <property type="project" value="UniProtKB-KW"/>
</dbReference>
<dbReference type="Gene3D" id="3.90.190.20">
    <property type="entry name" value="Mur ligase, C-terminal domain"/>
    <property type="match status" value="1"/>
</dbReference>
<dbReference type="Gene3D" id="3.40.1190.10">
    <property type="entry name" value="Mur-like, catalytic domain"/>
    <property type="match status" value="1"/>
</dbReference>
<dbReference type="Gene3D" id="3.40.50.720">
    <property type="entry name" value="NAD(P)-binding Rossmann-like Domain"/>
    <property type="match status" value="1"/>
</dbReference>
<dbReference type="HAMAP" id="MF_00639">
    <property type="entry name" value="MurD"/>
    <property type="match status" value="1"/>
</dbReference>
<dbReference type="InterPro" id="IPR036565">
    <property type="entry name" value="Mur-like_cat_sf"/>
</dbReference>
<dbReference type="InterPro" id="IPR004101">
    <property type="entry name" value="Mur_ligase_C"/>
</dbReference>
<dbReference type="InterPro" id="IPR036615">
    <property type="entry name" value="Mur_ligase_C_dom_sf"/>
</dbReference>
<dbReference type="InterPro" id="IPR013221">
    <property type="entry name" value="Mur_ligase_cen"/>
</dbReference>
<dbReference type="InterPro" id="IPR005762">
    <property type="entry name" value="MurD"/>
</dbReference>
<dbReference type="NCBIfam" id="TIGR01087">
    <property type="entry name" value="murD"/>
    <property type="match status" value="1"/>
</dbReference>
<dbReference type="PANTHER" id="PTHR43692">
    <property type="entry name" value="UDP-N-ACETYLMURAMOYLALANINE--D-GLUTAMATE LIGASE"/>
    <property type="match status" value="1"/>
</dbReference>
<dbReference type="PANTHER" id="PTHR43692:SF1">
    <property type="entry name" value="UDP-N-ACETYLMURAMOYLALANINE--D-GLUTAMATE LIGASE"/>
    <property type="match status" value="1"/>
</dbReference>
<dbReference type="Pfam" id="PF02875">
    <property type="entry name" value="Mur_ligase_C"/>
    <property type="match status" value="1"/>
</dbReference>
<dbReference type="Pfam" id="PF08245">
    <property type="entry name" value="Mur_ligase_M"/>
    <property type="match status" value="1"/>
</dbReference>
<dbReference type="Pfam" id="PF21799">
    <property type="entry name" value="MurD-like_N"/>
    <property type="match status" value="1"/>
</dbReference>
<dbReference type="SUPFAM" id="SSF51984">
    <property type="entry name" value="MurCD N-terminal domain"/>
    <property type="match status" value="1"/>
</dbReference>
<dbReference type="SUPFAM" id="SSF53623">
    <property type="entry name" value="MurD-like peptide ligases, catalytic domain"/>
    <property type="match status" value="1"/>
</dbReference>
<dbReference type="SUPFAM" id="SSF53244">
    <property type="entry name" value="MurD-like peptide ligases, peptide-binding domain"/>
    <property type="match status" value="1"/>
</dbReference>
<accession>B4U1U3</accession>
<comment type="function">
    <text evidence="1">Cell wall formation. Catalyzes the addition of glutamate to the nucleotide precursor UDP-N-acetylmuramoyl-L-alanine (UMA).</text>
</comment>
<comment type="catalytic activity">
    <reaction evidence="1">
        <text>UDP-N-acetyl-alpha-D-muramoyl-L-alanine + D-glutamate + ATP = UDP-N-acetyl-alpha-D-muramoyl-L-alanyl-D-glutamate + ADP + phosphate + H(+)</text>
        <dbReference type="Rhea" id="RHEA:16429"/>
        <dbReference type="ChEBI" id="CHEBI:15378"/>
        <dbReference type="ChEBI" id="CHEBI:29986"/>
        <dbReference type="ChEBI" id="CHEBI:30616"/>
        <dbReference type="ChEBI" id="CHEBI:43474"/>
        <dbReference type="ChEBI" id="CHEBI:83898"/>
        <dbReference type="ChEBI" id="CHEBI:83900"/>
        <dbReference type="ChEBI" id="CHEBI:456216"/>
        <dbReference type="EC" id="6.3.2.9"/>
    </reaction>
</comment>
<comment type="pathway">
    <text evidence="1">Cell wall biogenesis; peptidoglycan biosynthesis.</text>
</comment>
<comment type="subcellular location">
    <subcellularLocation>
        <location evidence="1">Cytoplasm</location>
    </subcellularLocation>
</comment>
<comment type="similarity">
    <text evidence="1">Belongs to the MurCDEF family.</text>
</comment>
<feature type="chain" id="PRO_1000130873" description="UDP-N-acetylmuramoylalanine--D-glutamate ligase">
    <location>
        <begin position="1"/>
        <end position="452"/>
    </location>
</feature>
<feature type="binding site" evidence="1">
    <location>
        <begin position="119"/>
        <end position="125"/>
    </location>
    <ligand>
        <name>ATP</name>
        <dbReference type="ChEBI" id="CHEBI:30616"/>
    </ligand>
</feature>
<evidence type="ECO:0000255" key="1">
    <source>
        <dbReference type="HAMAP-Rule" id="MF_00639"/>
    </source>
</evidence>
<reference key="1">
    <citation type="journal article" date="2008" name="PLoS ONE">
        <title>Genome sequence of a lancefield group C Streptococcus zooepidemicus strain causing epidemic nephritis: new information about an old disease.</title>
        <authorList>
            <person name="Beres S.B."/>
            <person name="Sesso R."/>
            <person name="Pinto S.W.L."/>
            <person name="Hoe N.P."/>
            <person name="Porcella S.F."/>
            <person name="Deleo F.R."/>
            <person name="Musser J.M."/>
        </authorList>
    </citation>
    <scope>NUCLEOTIDE SEQUENCE [LARGE SCALE GENOMIC DNA]</scope>
    <source>
        <strain>MGCS10565</strain>
    </source>
</reference>
<sequence>MKTITEFQNKKVLILGLAKSGEAAARLLARLGAIVTVNDSKPFEENPAAQALLEEGIRVICGSHPLELLDEDFYCMVKNPGIRYDNPMVVCALDKAISILTEVELAYLVSEAPIIGITGSNGKTTTTTMIADVLNAGNQSALLAGNIGFPASEVAQAATAKDILVMELSSFQLLGTEQFQPHIAVITNLVPTHLDYHGSFEDYIAAKWRIQHRMTDKDYLVLNADQELVKSLAQKTKASPVFFSTKEKVDGAYLADGYLYFKEEQVMSAAELGLPGRHNIENALATIAVAKLRGISNQVISKTLSHFSGVKHRLQLVGTLNQVTFYNDSKSTNILACQKALSGFDNSRVILIAGGLDRGNEFDELVPDLVGLKKMILLGESAERMKRAADKAGVSYLDAKDVAAATKIAFEQAKPGDIILLSPANASWDMYPSFESRGDEFLAAYDALKGEA</sequence>
<keyword id="KW-0067">ATP-binding</keyword>
<keyword id="KW-0131">Cell cycle</keyword>
<keyword id="KW-0132">Cell division</keyword>
<keyword id="KW-0133">Cell shape</keyword>
<keyword id="KW-0961">Cell wall biogenesis/degradation</keyword>
<keyword id="KW-0963">Cytoplasm</keyword>
<keyword id="KW-0436">Ligase</keyword>
<keyword id="KW-0547">Nucleotide-binding</keyword>
<keyword id="KW-0573">Peptidoglycan synthesis</keyword>
<gene>
    <name evidence="1" type="primary">murD</name>
    <name type="ordered locus">Sez_0591</name>
</gene>
<name>MURD_STREM</name>
<organism>
    <name type="scientific">Streptococcus equi subsp. zooepidemicus (strain MGCS10565)</name>
    <dbReference type="NCBI Taxonomy" id="552526"/>
    <lineage>
        <taxon>Bacteria</taxon>
        <taxon>Bacillati</taxon>
        <taxon>Bacillota</taxon>
        <taxon>Bacilli</taxon>
        <taxon>Lactobacillales</taxon>
        <taxon>Streptococcaceae</taxon>
        <taxon>Streptococcus</taxon>
    </lineage>
</organism>